<protein>
    <recommendedName>
        <fullName evidence="1">Nuclear distribution protein nudF</fullName>
    </recommendedName>
    <alternativeName>
        <fullName evidence="1">Lissencephaly-1 homolog</fullName>
        <shortName evidence="1">LIS-1</shortName>
    </alternativeName>
</protein>
<organism>
    <name type="scientific">Aspergillus niger (strain ATCC MYA-4892 / CBS 513.88 / FGSC A1513)</name>
    <dbReference type="NCBI Taxonomy" id="425011"/>
    <lineage>
        <taxon>Eukaryota</taxon>
        <taxon>Fungi</taxon>
        <taxon>Dikarya</taxon>
        <taxon>Ascomycota</taxon>
        <taxon>Pezizomycotina</taxon>
        <taxon>Eurotiomycetes</taxon>
        <taxon>Eurotiomycetidae</taxon>
        <taxon>Eurotiales</taxon>
        <taxon>Aspergillaceae</taxon>
        <taxon>Aspergillus</taxon>
        <taxon>Aspergillus subgen. Circumdati</taxon>
    </lineage>
</organism>
<comment type="function">
    <text evidence="1">Positively regulates the activity of the minus-end directed microtubule motor protein dynein. May enhance dynein-mediated microtubule sliding by targeting dynein to the microtubule plus end. Required for nuclear migration during vegetative growth as well as development. Required for retrograde early endosome (EE) transport from the hyphal tip. Required for localization of dynein to the mitotic spindle poles. Recruits additional proteins to the dynein complex at SPBs.</text>
</comment>
<comment type="subunit">
    <text evidence="1">Self-associates. Interacts with nudE and dynein.</text>
</comment>
<comment type="subcellular location">
    <subcellularLocation>
        <location evidence="1">Cytoplasm</location>
        <location evidence="1">Cytoskeleton</location>
    </subcellularLocation>
    <subcellularLocation>
        <location evidence="1">Cytoplasm</location>
        <location evidence="1">Cytoskeleton</location>
        <location evidence="1">Spindle pole</location>
    </subcellularLocation>
    <text evidence="1">Localizes to the plus ends of microtubules at the hyphal tip and the mitotic spindle poles.</text>
</comment>
<comment type="domain">
    <text evidence="1">Dimerization mediated by the LisH domain may be required to activate dynein.</text>
</comment>
<comment type="similarity">
    <text evidence="1">Belongs to the WD repeat LIS1/nudF family.</text>
</comment>
<reference key="1">
    <citation type="journal article" date="2007" name="Nat. Biotechnol.">
        <title>Genome sequencing and analysis of the versatile cell factory Aspergillus niger CBS 513.88.</title>
        <authorList>
            <person name="Pel H.J."/>
            <person name="de Winde J.H."/>
            <person name="Archer D.B."/>
            <person name="Dyer P.S."/>
            <person name="Hofmann G."/>
            <person name="Schaap P.J."/>
            <person name="Turner G."/>
            <person name="de Vries R.P."/>
            <person name="Albang R."/>
            <person name="Albermann K."/>
            <person name="Andersen M.R."/>
            <person name="Bendtsen J.D."/>
            <person name="Benen J.A.E."/>
            <person name="van den Berg M."/>
            <person name="Breestraat S."/>
            <person name="Caddick M.X."/>
            <person name="Contreras R."/>
            <person name="Cornell M."/>
            <person name="Coutinho P.M."/>
            <person name="Danchin E.G.J."/>
            <person name="Debets A.J.M."/>
            <person name="Dekker P."/>
            <person name="van Dijck P.W.M."/>
            <person name="van Dijk A."/>
            <person name="Dijkhuizen L."/>
            <person name="Driessen A.J.M."/>
            <person name="d'Enfert C."/>
            <person name="Geysens S."/>
            <person name="Goosen C."/>
            <person name="Groot G.S.P."/>
            <person name="de Groot P.W.J."/>
            <person name="Guillemette T."/>
            <person name="Henrissat B."/>
            <person name="Herweijer M."/>
            <person name="van den Hombergh J.P.T.W."/>
            <person name="van den Hondel C.A.M.J.J."/>
            <person name="van der Heijden R.T.J.M."/>
            <person name="van der Kaaij R.M."/>
            <person name="Klis F.M."/>
            <person name="Kools H.J."/>
            <person name="Kubicek C.P."/>
            <person name="van Kuyk P.A."/>
            <person name="Lauber J."/>
            <person name="Lu X."/>
            <person name="van der Maarel M.J.E.C."/>
            <person name="Meulenberg R."/>
            <person name="Menke H."/>
            <person name="Mortimer M.A."/>
            <person name="Nielsen J."/>
            <person name="Oliver S.G."/>
            <person name="Olsthoorn M."/>
            <person name="Pal K."/>
            <person name="van Peij N.N.M.E."/>
            <person name="Ram A.F.J."/>
            <person name="Rinas U."/>
            <person name="Roubos J.A."/>
            <person name="Sagt C.M.J."/>
            <person name="Schmoll M."/>
            <person name="Sun J."/>
            <person name="Ussery D."/>
            <person name="Varga J."/>
            <person name="Vervecken W."/>
            <person name="van de Vondervoort P.J.J."/>
            <person name="Wedler H."/>
            <person name="Woesten H.A.B."/>
            <person name="Zeng A.-P."/>
            <person name="van Ooyen A.J.J."/>
            <person name="Visser J."/>
            <person name="Stam H."/>
        </authorList>
    </citation>
    <scope>NUCLEOTIDE SEQUENCE [LARGE SCALE GENOMIC DNA]</scope>
    <source>
        <strain>ATCC MYA-4892 / CBS 513.88 / FGSC A1513</strain>
    </source>
</reference>
<sequence>MTKILTSSQAEELHKSIIAYLSSINASRSCEVLREELQVDSSFDDALCRKYEGLLEKKWTGIARLQKKILDLESKLAGLQTELDTISPTARSTGKDPINWLPTSSRHTFESHRDAVTCVAFHPVFTSLASGSEDCTIKIWDWELGELERTLKGHMRPVSDLDFGGQKGHTILASCSSDLQIKLWDPNKDYANVRTLSGHDHSVSAVRFLRQTDNILISASRDATIRIWDVSTGYCVKVIDSQGSWINDVSPSFDGKWLVTGGRDQAAMVWEVASAKSVASLIGHENFIECCVFAPPSSYKHLAAIAGLKTAPPASSSSEFIATGARDKTIKLWESRGRLIKTLVGHDNWVRGLLFHPGGKYLISVADDKTIRCWDLSQGGRLVKTINAHGHFVSCIRWGPVPVSDVPVETSESTKSSKSDSVKPGFQCVIATGSADSSVRIFT</sequence>
<evidence type="ECO:0000255" key="1">
    <source>
        <dbReference type="HAMAP-Rule" id="MF_03141"/>
    </source>
</evidence>
<name>LIS1_ASPNC</name>
<accession>A2QP30</accession>
<dbReference type="EMBL" id="AM270140">
    <property type="protein sequence ID" value="CAK39617.1"/>
    <property type="molecule type" value="Genomic_DNA"/>
</dbReference>
<dbReference type="RefSeq" id="XP_001391876.1">
    <property type="nucleotide sequence ID" value="XM_001391839.1"/>
</dbReference>
<dbReference type="SMR" id="A2QP30"/>
<dbReference type="EnsemblFungi" id="CAK39617">
    <property type="protein sequence ID" value="CAK39617"/>
    <property type="gene ID" value="An07g08010"/>
</dbReference>
<dbReference type="GeneID" id="4982070"/>
<dbReference type="KEGG" id="ang:An07g08010"/>
<dbReference type="VEuPathDB" id="FungiDB:An07g08010"/>
<dbReference type="HOGENOM" id="CLU_000288_57_15_1"/>
<dbReference type="Proteomes" id="UP000006706">
    <property type="component" value="Chromosome 4L"/>
</dbReference>
<dbReference type="GO" id="GO:0005737">
    <property type="term" value="C:cytoplasm"/>
    <property type="evidence" value="ECO:0007669"/>
    <property type="project" value="UniProtKB-UniRule"/>
</dbReference>
<dbReference type="GO" id="GO:0005874">
    <property type="term" value="C:microtubule"/>
    <property type="evidence" value="ECO:0007669"/>
    <property type="project" value="UniProtKB-KW"/>
</dbReference>
<dbReference type="GO" id="GO:0005875">
    <property type="term" value="C:microtubule associated complex"/>
    <property type="evidence" value="ECO:0007669"/>
    <property type="project" value="UniProtKB-UniRule"/>
</dbReference>
<dbReference type="GO" id="GO:0000922">
    <property type="term" value="C:spindle pole"/>
    <property type="evidence" value="ECO:0007669"/>
    <property type="project" value="UniProtKB-SubCell"/>
</dbReference>
<dbReference type="GO" id="GO:1990234">
    <property type="term" value="C:transferase complex"/>
    <property type="evidence" value="ECO:0007669"/>
    <property type="project" value="UniProtKB-ARBA"/>
</dbReference>
<dbReference type="GO" id="GO:0070840">
    <property type="term" value="F:dynein complex binding"/>
    <property type="evidence" value="ECO:0007669"/>
    <property type="project" value="UniProtKB-UniRule"/>
</dbReference>
<dbReference type="GO" id="GO:0051301">
    <property type="term" value="P:cell division"/>
    <property type="evidence" value="ECO:0007669"/>
    <property type="project" value="UniProtKB-KW"/>
</dbReference>
<dbReference type="GO" id="GO:0000132">
    <property type="term" value="P:establishment of mitotic spindle orientation"/>
    <property type="evidence" value="ECO:0007669"/>
    <property type="project" value="UniProtKB-UniRule"/>
</dbReference>
<dbReference type="GO" id="GO:0051012">
    <property type="term" value="P:microtubule sliding"/>
    <property type="evidence" value="ECO:0007669"/>
    <property type="project" value="UniProtKB-UniRule"/>
</dbReference>
<dbReference type="CDD" id="cd00200">
    <property type="entry name" value="WD40"/>
    <property type="match status" value="1"/>
</dbReference>
<dbReference type="FunFam" id="2.130.10.10:FF:000342">
    <property type="entry name" value="Nuclear distribution protein PAC1"/>
    <property type="match status" value="1"/>
</dbReference>
<dbReference type="FunFam" id="1.20.960.30:FF:000002">
    <property type="entry name" value="Platelet-activating factor acetylhydrolase ib"/>
    <property type="match status" value="1"/>
</dbReference>
<dbReference type="Gene3D" id="1.20.960.30">
    <property type="match status" value="1"/>
</dbReference>
<dbReference type="Gene3D" id="2.130.10.10">
    <property type="entry name" value="YVTN repeat-like/Quinoprotein amine dehydrogenase"/>
    <property type="match status" value="1"/>
</dbReference>
<dbReference type="HAMAP" id="MF_03141">
    <property type="entry name" value="lis1"/>
    <property type="match status" value="1"/>
</dbReference>
<dbReference type="InterPro" id="IPR017252">
    <property type="entry name" value="Dynein_regulator_LIS1"/>
</dbReference>
<dbReference type="InterPro" id="IPR020472">
    <property type="entry name" value="G-protein_beta_WD-40_rep"/>
</dbReference>
<dbReference type="InterPro" id="IPR037190">
    <property type="entry name" value="LIS1_N"/>
</dbReference>
<dbReference type="InterPro" id="IPR006594">
    <property type="entry name" value="LisH"/>
</dbReference>
<dbReference type="InterPro" id="IPR056795">
    <property type="entry name" value="PAC1-like_LisH-like_dom"/>
</dbReference>
<dbReference type="InterPro" id="IPR015943">
    <property type="entry name" value="WD40/YVTN_repeat-like_dom_sf"/>
</dbReference>
<dbReference type="InterPro" id="IPR019775">
    <property type="entry name" value="WD40_repeat_CS"/>
</dbReference>
<dbReference type="InterPro" id="IPR036322">
    <property type="entry name" value="WD40_repeat_dom_sf"/>
</dbReference>
<dbReference type="InterPro" id="IPR001680">
    <property type="entry name" value="WD40_rpt"/>
</dbReference>
<dbReference type="PANTHER" id="PTHR22847:SF637">
    <property type="entry name" value="WD REPEAT DOMAIN 5B"/>
    <property type="match status" value="1"/>
</dbReference>
<dbReference type="PANTHER" id="PTHR22847">
    <property type="entry name" value="WD40 REPEAT PROTEIN"/>
    <property type="match status" value="1"/>
</dbReference>
<dbReference type="Pfam" id="PF24951">
    <property type="entry name" value="LisH_PAC1"/>
    <property type="match status" value="1"/>
</dbReference>
<dbReference type="Pfam" id="PF00400">
    <property type="entry name" value="WD40"/>
    <property type="match status" value="6"/>
</dbReference>
<dbReference type="PIRSF" id="PIRSF037647">
    <property type="entry name" value="Dynein_regulator_Lis1"/>
    <property type="match status" value="1"/>
</dbReference>
<dbReference type="PRINTS" id="PR00320">
    <property type="entry name" value="GPROTEINBRPT"/>
</dbReference>
<dbReference type="SMART" id="SM00320">
    <property type="entry name" value="WD40"/>
    <property type="match status" value="7"/>
</dbReference>
<dbReference type="SUPFAM" id="SSF109925">
    <property type="entry name" value="Lissencephaly-1 protein (Lis-1, PAF-AH alpha) N-terminal domain"/>
    <property type="match status" value="1"/>
</dbReference>
<dbReference type="SUPFAM" id="SSF50978">
    <property type="entry name" value="WD40 repeat-like"/>
    <property type="match status" value="1"/>
</dbReference>
<dbReference type="PROSITE" id="PS50896">
    <property type="entry name" value="LISH"/>
    <property type="match status" value="1"/>
</dbReference>
<dbReference type="PROSITE" id="PS00678">
    <property type="entry name" value="WD_REPEATS_1"/>
    <property type="match status" value="3"/>
</dbReference>
<dbReference type="PROSITE" id="PS50082">
    <property type="entry name" value="WD_REPEATS_2"/>
    <property type="match status" value="6"/>
</dbReference>
<dbReference type="PROSITE" id="PS50294">
    <property type="entry name" value="WD_REPEATS_REGION"/>
    <property type="match status" value="1"/>
</dbReference>
<feature type="chain" id="PRO_0000405070" description="Nuclear distribution protein nudF">
    <location>
        <begin position="1"/>
        <end position="443"/>
    </location>
</feature>
<feature type="domain" description="LisH" evidence="1">
    <location>
        <begin position="9"/>
        <end position="41"/>
    </location>
</feature>
<feature type="repeat" description="WD 1">
    <location>
        <begin position="111"/>
        <end position="152"/>
    </location>
</feature>
<feature type="repeat" description="WD 2">
    <location>
        <begin position="154"/>
        <end position="194"/>
    </location>
</feature>
<feature type="repeat" description="WD 3">
    <location>
        <begin position="198"/>
        <end position="238"/>
    </location>
</feature>
<feature type="repeat" description="WD 4">
    <location>
        <begin position="241"/>
        <end position="280"/>
    </location>
</feature>
<feature type="repeat" description="WD 5">
    <location>
        <begin position="283"/>
        <end position="343"/>
    </location>
</feature>
<feature type="repeat" description="WD 6">
    <location>
        <begin position="345"/>
        <end position="384"/>
    </location>
</feature>
<feature type="repeat" description="WD 7">
    <location>
        <begin position="388"/>
        <end position="427"/>
    </location>
</feature>
<feature type="repeat" description="WD 8">
    <location>
        <begin position="429"/>
        <end position="443"/>
    </location>
</feature>
<feature type="coiled-coil region" evidence="1">
    <location>
        <begin position="60"/>
        <end position="87"/>
    </location>
</feature>
<keyword id="KW-0131">Cell cycle</keyword>
<keyword id="KW-0132">Cell division</keyword>
<keyword id="KW-0175">Coiled coil</keyword>
<keyword id="KW-0963">Cytoplasm</keyword>
<keyword id="KW-0206">Cytoskeleton</keyword>
<keyword id="KW-0493">Microtubule</keyword>
<keyword id="KW-0498">Mitosis</keyword>
<keyword id="KW-1185">Reference proteome</keyword>
<keyword id="KW-0677">Repeat</keyword>
<keyword id="KW-0813">Transport</keyword>
<keyword id="KW-0853">WD repeat</keyword>
<gene>
    <name evidence="1" type="primary">nudF</name>
    <name evidence="1" type="synonym">lis1</name>
    <name type="ORF">An07g08010</name>
</gene>
<proteinExistence type="inferred from homology"/>